<evidence type="ECO:0000255" key="1">
    <source>
        <dbReference type="HAMAP-Rule" id="MF_01725"/>
    </source>
</evidence>
<protein>
    <recommendedName>
        <fullName evidence="1">Zinc import ATP-binding protein ZnuC</fullName>
        <ecNumber evidence="1">7.2.2.20</ecNumber>
    </recommendedName>
</protein>
<gene>
    <name evidence="1" type="primary">znuC</name>
    <name type="ordered locus">Sde_0058</name>
</gene>
<proteinExistence type="inferred from homology"/>
<name>ZNUC_SACD2</name>
<feature type="chain" id="PRO_0000281545" description="Zinc import ATP-binding protein ZnuC">
    <location>
        <begin position="1"/>
        <end position="261"/>
    </location>
</feature>
<feature type="domain" description="ABC transporter" evidence="1">
    <location>
        <begin position="6"/>
        <end position="227"/>
    </location>
</feature>
<feature type="binding site" evidence="1">
    <location>
        <begin position="38"/>
        <end position="45"/>
    </location>
    <ligand>
        <name>ATP</name>
        <dbReference type="ChEBI" id="CHEBI:30616"/>
    </ligand>
</feature>
<comment type="function">
    <text evidence="1">Part of the ABC transporter complex ZnuABC involved in zinc import. Responsible for energy coupling to the transport system.</text>
</comment>
<comment type="catalytic activity">
    <reaction evidence="1">
        <text>Zn(2+)(out) + ATP(in) + H2O(in) = Zn(2+)(in) + ADP(in) + phosphate(in) + H(+)(in)</text>
        <dbReference type="Rhea" id="RHEA:29795"/>
        <dbReference type="ChEBI" id="CHEBI:15377"/>
        <dbReference type="ChEBI" id="CHEBI:15378"/>
        <dbReference type="ChEBI" id="CHEBI:29105"/>
        <dbReference type="ChEBI" id="CHEBI:30616"/>
        <dbReference type="ChEBI" id="CHEBI:43474"/>
        <dbReference type="ChEBI" id="CHEBI:456216"/>
        <dbReference type="EC" id="7.2.2.20"/>
    </reaction>
</comment>
<comment type="subunit">
    <text evidence="1">The complex is composed of two ATP-binding proteins (ZnuC), two transmembrane proteins (ZnuB) and a solute-binding protein (ZnuA).</text>
</comment>
<comment type="subcellular location">
    <subcellularLocation>
        <location evidence="1">Cell inner membrane</location>
        <topology evidence="1">Peripheral membrane protein</topology>
    </subcellularLocation>
</comment>
<comment type="similarity">
    <text evidence="1">Belongs to the ABC transporter superfamily. Zinc importer (TC 3.A.1.15.5) family.</text>
</comment>
<sequence>MAAPLIQLNNIHLRFSAEPVLEGINLTIHQSEIVTIIGPNGAGKSSLVKVITGLIAPTTGSITHCAQGKQPLRIGYMPQTLHLDPSMPIKVSRFLSLAGPKAPSRSARKAALEQVGIANLSSAQMHNLSGGEFQRVLLARAILQRPNLLVLDEPLQGVDVNGQIELYRLIAELRQQLQCAIVMVSHDLHLVMAQTDSVVCLNRHMCCHGQPESVSKHPEYLKLFGKQASDDLAVYTHNHDHHHDMHGDVVGCSDECDHHHD</sequence>
<keyword id="KW-0067">ATP-binding</keyword>
<keyword id="KW-0997">Cell inner membrane</keyword>
<keyword id="KW-1003">Cell membrane</keyword>
<keyword id="KW-0406">Ion transport</keyword>
<keyword id="KW-0472">Membrane</keyword>
<keyword id="KW-0547">Nucleotide-binding</keyword>
<keyword id="KW-1185">Reference proteome</keyword>
<keyword id="KW-1278">Translocase</keyword>
<keyword id="KW-0813">Transport</keyword>
<keyword id="KW-0862">Zinc</keyword>
<keyword id="KW-0864">Zinc transport</keyword>
<dbReference type="EC" id="7.2.2.20" evidence="1"/>
<dbReference type="EMBL" id="CP000282">
    <property type="protein sequence ID" value="ABD79322.1"/>
    <property type="molecule type" value="Genomic_DNA"/>
</dbReference>
<dbReference type="RefSeq" id="WP_011466546.1">
    <property type="nucleotide sequence ID" value="NC_007912.1"/>
</dbReference>
<dbReference type="SMR" id="Q21PQ7"/>
<dbReference type="STRING" id="203122.Sde_0058"/>
<dbReference type="GeneID" id="98611776"/>
<dbReference type="KEGG" id="sde:Sde_0058"/>
<dbReference type="eggNOG" id="COG1121">
    <property type="taxonomic scope" value="Bacteria"/>
</dbReference>
<dbReference type="HOGENOM" id="CLU_000604_1_11_6"/>
<dbReference type="OrthoDB" id="5866165at2"/>
<dbReference type="Proteomes" id="UP000001947">
    <property type="component" value="Chromosome"/>
</dbReference>
<dbReference type="GO" id="GO:0005886">
    <property type="term" value="C:plasma membrane"/>
    <property type="evidence" value="ECO:0007669"/>
    <property type="project" value="UniProtKB-SubCell"/>
</dbReference>
<dbReference type="GO" id="GO:0015633">
    <property type="term" value="F:ABC-type zinc transporter activity"/>
    <property type="evidence" value="ECO:0007669"/>
    <property type="project" value="UniProtKB-EC"/>
</dbReference>
<dbReference type="GO" id="GO:0005524">
    <property type="term" value="F:ATP binding"/>
    <property type="evidence" value="ECO:0007669"/>
    <property type="project" value="UniProtKB-KW"/>
</dbReference>
<dbReference type="GO" id="GO:0016887">
    <property type="term" value="F:ATP hydrolysis activity"/>
    <property type="evidence" value="ECO:0007669"/>
    <property type="project" value="InterPro"/>
</dbReference>
<dbReference type="GO" id="GO:0010043">
    <property type="term" value="P:response to zinc ion"/>
    <property type="evidence" value="ECO:0007669"/>
    <property type="project" value="TreeGrafter"/>
</dbReference>
<dbReference type="CDD" id="cd03235">
    <property type="entry name" value="ABC_Metallic_Cations"/>
    <property type="match status" value="1"/>
</dbReference>
<dbReference type="FunFam" id="3.40.50.300:FF:000392">
    <property type="entry name" value="Zinc import ATP-binding protein ZnuC"/>
    <property type="match status" value="1"/>
</dbReference>
<dbReference type="Gene3D" id="3.40.50.300">
    <property type="entry name" value="P-loop containing nucleotide triphosphate hydrolases"/>
    <property type="match status" value="1"/>
</dbReference>
<dbReference type="InterPro" id="IPR003593">
    <property type="entry name" value="AAA+_ATPase"/>
</dbReference>
<dbReference type="InterPro" id="IPR003439">
    <property type="entry name" value="ABC_transporter-like_ATP-bd"/>
</dbReference>
<dbReference type="InterPro" id="IPR017871">
    <property type="entry name" value="ABC_transporter-like_CS"/>
</dbReference>
<dbReference type="InterPro" id="IPR050153">
    <property type="entry name" value="Metal_Ion_Import_ABC"/>
</dbReference>
<dbReference type="InterPro" id="IPR027417">
    <property type="entry name" value="P-loop_NTPase"/>
</dbReference>
<dbReference type="NCBIfam" id="NF007090">
    <property type="entry name" value="PRK09544.1"/>
    <property type="match status" value="1"/>
</dbReference>
<dbReference type="PANTHER" id="PTHR42734">
    <property type="entry name" value="METAL TRANSPORT SYSTEM ATP-BINDING PROTEIN TM_0124-RELATED"/>
    <property type="match status" value="1"/>
</dbReference>
<dbReference type="PANTHER" id="PTHR42734:SF9">
    <property type="entry name" value="ZINC IMPORT ATP-BINDING PROTEIN ZNUC"/>
    <property type="match status" value="1"/>
</dbReference>
<dbReference type="Pfam" id="PF00005">
    <property type="entry name" value="ABC_tran"/>
    <property type="match status" value="1"/>
</dbReference>
<dbReference type="SMART" id="SM00382">
    <property type="entry name" value="AAA"/>
    <property type="match status" value="1"/>
</dbReference>
<dbReference type="SUPFAM" id="SSF52540">
    <property type="entry name" value="P-loop containing nucleoside triphosphate hydrolases"/>
    <property type="match status" value="1"/>
</dbReference>
<dbReference type="PROSITE" id="PS00211">
    <property type="entry name" value="ABC_TRANSPORTER_1"/>
    <property type="match status" value="1"/>
</dbReference>
<dbReference type="PROSITE" id="PS50893">
    <property type="entry name" value="ABC_TRANSPORTER_2"/>
    <property type="match status" value="1"/>
</dbReference>
<dbReference type="PROSITE" id="PS51298">
    <property type="entry name" value="ZNUC"/>
    <property type="match status" value="1"/>
</dbReference>
<accession>Q21PQ7</accession>
<reference key="1">
    <citation type="journal article" date="2008" name="PLoS Genet.">
        <title>Complete genome sequence of the complex carbohydrate-degrading marine bacterium, Saccharophagus degradans strain 2-40 T.</title>
        <authorList>
            <person name="Weiner R.M."/>
            <person name="Taylor L.E. II"/>
            <person name="Henrissat B."/>
            <person name="Hauser L."/>
            <person name="Land M."/>
            <person name="Coutinho P.M."/>
            <person name="Rancurel C."/>
            <person name="Saunders E.H."/>
            <person name="Longmire A.G."/>
            <person name="Zhang H."/>
            <person name="Bayer E.A."/>
            <person name="Gilbert H.J."/>
            <person name="Larimer F."/>
            <person name="Zhulin I.B."/>
            <person name="Ekborg N.A."/>
            <person name="Lamed R."/>
            <person name="Richardson P.M."/>
            <person name="Borovok I."/>
            <person name="Hutcheson S."/>
        </authorList>
    </citation>
    <scope>NUCLEOTIDE SEQUENCE [LARGE SCALE GENOMIC DNA]</scope>
    <source>
        <strain>2-40 / ATCC 43961 / DSM 17024</strain>
    </source>
</reference>
<organism>
    <name type="scientific">Saccharophagus degradans (strain 2-40 / ATCC 43961 / DSM 17024)</name>
    <dbReference type="NCBI Taxonomy" id="203122"/>
    <lineage>
        <taxon>Bacteria</taxon>
        <taxon>Pseudomonadati</taxon>
        <taxon>Pseudomonadota</taxon>
        <taxon>Gammaproteobacteria</taxon>
        <taxon>Cellvibrionales</taxon>
        <taxon>Cellvibrionaceae</taxon>
        <taxon>Saccharophagus</taxon>
    </lineage>
</organism>